<reference key="1">
    <citation type="submission" date="2009-02" db="EMBL/GenBank/DDBJ databases">
        <title>Genome sequence of Bacillus cereus 03BB102.</title>
        <authorList>
            <person name="Dodson R.J."/>
            <person name="Jackson P."/>
            <person name="Munk A.C."/>
            <person name="Brettin T."/>
            <person name="Bruce D."/>
            <person name="Detter C."/>
            <person name="Tapia R."/>
            <person name="Han C."/>
            <person name="Sutton G."/>
            <person name="Sims D."/>
        </authorList>
    </citation>
    <scope>NUCLEOTIDE SEQUENCE [LARGE SCALE GENOMIC DNA]</scope>
    <source>
        <strain>03BB102</strain>
    </source>
</reference>
<proteinExistence type="inferred from homology"/>
<comment type="function">
    <text evidence="1">Specifically methylates guanosine-37 in various tRNAs.</text>
</comment>
<comment type="catalytic activity">
    <reaction evidence="1">
        <text>guanosine(37) in tRNA + S-adenosyl-L-methionine = N(1)-methylguanosine(37) in tRNA + S-adenosyl-L-homocysteine + H(+)</text>
        <dbReference type="Rhea" id="RHEA:36899"/>
        <dbReference type="Rhea" id="RHEA-COMP:10145"/>
        <dbReference type="Rhea" id="RHEA-COMP:10147"/>
        <dbReference type="ChEBI" id="CHEBI:15378"/>
        <dbReference type="ChEBI" id="CHEBI:57856"/>
        <dbReference type="ChEBI" id="CHEBI:59789"/>
        <dbReference type="ChEBI" id="CHEBI:73542"/>
        <dbReference type="ChEBI" id="CHEBI:74269"/>
        <dbReference type="EC" id="2.1.1.228"/>
    </reaction>
</comment>
<comment type="subunit">
    <text evidence="1">Homodimer.</text>
</comment>
<comment type="subcellular location">
    <subcellularLocation>
        <location evidence="1">Cytoplasm</location>
    </subcellularLocation>
</comment>
<comment type="similarity">
    <text evidence="1">Belongs to the RNA methyltransferase TrmD family.</text>
</comment>
<accession>C1EP65</accession>
<gene>
    <name evidence="1" type="primary">trmD</name>
    <name type="ordered locus">BCA_3941</name>
</gene>
<protein>
    <recommendedName>
        <fullName evidence="1">tRNA (guanine-N(1)-)-methyltransferase</fullName>
        <ecNumber evidence="1">2.1.1.228</ecNumber>
    </recommendedName>
    <alternativeName>
        <fullName evidence="1">M1G-methyltransferase</fullName>
    </alternativeName>
    <alternativeName>
        <fullName evidence="1">tRNA [GM37] methyltransferase</fullName>
    </alternativeName>
</protein>
<sequence length="244" mass="27967">MKIDILTLFPDMFTGVFGSSILKKAQEKEAVELRVVNFRDYTTSKHNSVDDYPYGGGAGMVLTPQPIFDAVEDLTKETERKPRVVLMCPQGERFTQKKAEELAEEEHLIFVCGHYEGYDERIREHLVTDEISIGDYVLTGGELASMVITDSVVRLLPGVLGNHASQVEDSFSTGLLEHPHYTRPADFRGMKVPDVLMSGNHKNIDEWRHKESLRRTYTRRPDLLEERELSKQEKKWLEQIKEGK</sequence>
<evidence type="ECO:0000255" key="1">
    <source>
        <dbReference type="HAMAP-Rule" id="MF_00605"/>
    </source>
</evidence>
<organism>
    <name type="scientific">Bacillus cereus (strain 03BB102)</name>
    <dbReference type="NCBI Taxonomy" id="572264"/>
    <lineage>
        <taxon>Bacteria</taxon>
        <taxon>Bacillati</taxon>
        <taxon>Bacillota</taxon>
        <taxon>Bacilli</taxon>
        <taxon>Bacillales</taxon>
        <taxon>Bacillaceae</taxon>
        <taxon>Bacillus</taxon>
        <taxon>Bacillus cereus group</taxon>
    </lineage>
</organism>
<keyword id="KW-0963">Cytoplasm</keyword>
<keyword id="KW-0489">Methyltransferase</keyword>
<keyword id="KW-0949">S-adenosyl-L-methionine</keyword>
<keyword id="KW-0808">Transferase</keyword>
<keyword id="KW-0819">tRNA processing</keyword>
<name>TRMD_BACC3</name>
<dbReference type="EC" id="2.1.1.228" evidence="1"/>
<dbReference type="EMBL" id="CP001407">
    <property type="protein sequence ID" value="ACO27204.1"/>
    <property type="molecule type" value="Genomic_DNA"/>
</dbReference>
<dbReference type="RefSeq" id="WP_000686892.1">
    <property type="nucleotide sequence ID" value="NZ_CP009318.1"/>
</dbReference>
<dbReference type="SMR" id="C1EP65"/>
<dbReference type="GeneID" id="93007271"/>
<dbReference type="KEGG" id="bcx:BCA_3941"/>
<dbReference type="PATRIC" id="fig|572264.18.peg.3897"/>
<dbReference type="Proteomes" id="UP000002210">
    <property type="component" value="Chromosome"/>
</dbReference>
<dbReference type="GO" id="GO:0005829">
    <property type="term" value="C:cytosol"/>
    <property type="evidence" value="ECO:0007669"/>
    <property type="project" value="TreeGrafter"/>
</dbReference>
<dbReference type="GO" id="GO:0052906">
    <property type="term" value="F:tRNA (guanine(37)-N1)-methyltransferase activity"/>
    <property type="evidence" value="ECO:0007669"/>
    <property type="project" value="UniProtKB-UniRule"/>
</dbReference>
<dbReference type="GO" id="GO:0002939">
    <property type="term" value="P:tRNA N1-guanine methylation"/>
    <property type="evidence" value="ECO:0007669"/>
    <property type="project" value="TreeGrafter"/>
</dbReference>
<dbReference type="CDD" id="cd18080">
    <property type="entry name" value="TrmD-like"/>
    <property type="match status" value="1"/>
</dbReference>
<dbReference type="FunFam" id="1.10.1270.20:FF:000001">
    <property type="entry name" value="tRNA (guanine-N(1)-)-methyltransferase"/>
    <property type="match status" value="1"/>
</dbReference>
<dbReference type="FunFam" id="3.40.1280.10:FF:000001">
    <property type="entry name" value="tRNA (guanine-N(1)-)-methyltransferase"/>
    <property type="match status" value="1"/>
</dbReference>
<dbReference type="Gene3D" id="3.40.1280.10">
    <property type="match status" value="1"/>
</dbReference>
<dbReference type="Gene3D" id="1.10.1270.20">
    <property type="entry name" value="tRNA(m1g37)methyltransferase, domain 2"/>
    <property type="match status" value="1"/>
</dbReference>
<dbReference type="HAMAP" id="MF_00605">
    <property type="entry name" value="TrmD"/>
    <property type="match status" value="1"/>
</dbReference>
<dbReference type="InterPro" id="IPR029028">
    <property type="entry name" value="Alpha/beta_knot_MTases"/>
</dbReference>
<dbReference type="InterPro" id="IPR023148">
    <property type="entry name" value="tRNA_m1G_MeTrfase_C_sf"/>
</dbReference>
<dbReference type="InterPro" id="IPR002649">
    <property type="entry name" value="tRNA_m1G_MeTrfase_TrmD"/>
</dbReference>
<dbReference type="InterPro" id="IPR029026">
    <property type="entry name" value="tRNA_m1G_MTases_N"/>
</dbReference>
<dbReference type="InterPro" id="IPR016009">
    <property type="entry name" value="tRNA_MeTrfase_TRMD/TRM10"/>
</dbReference>
<dbReference type="NCBIfam" id="NF000648">
    <property type="entry name" value="PRK00026.1"/>
    <property type="match status" value="1"/>
</dbReference>
<dbReference type="NCBIfam" id="TIGR00088">
    <property type="entry name" value="trmD"/>
    <property type="match status" value="1"/>
</dbReference>
<dbReference type="PANTHER" id="PTHR46417">
    <property type="entry name" value="TRNA (GUANINE-N(1)-)-METHYLTRANSFERASE"/>
    <property type="match status" value="1"/>
</dbReference>
<dbReference type="PANTHER" id="PTHR46417:SF1">
    <property type="entry name" value="TRNA (GUANINE-N(1)-)-METHYLTRANSFERASE"/>
    <property type="match status" value="1"/>
</dbReference>
<dbReference type="Pfam" id="PF01746">
    <property type="entry name" value="tRNA_m1G_MT"/>
    <property type="match status" value="1"/>
</dbReference>
<dbReference type="PIRSF" id="PIRSF000386">
    <property type="entry name" value="tRNA_mtase"/>
    <property type="match status" value="1"/>
</dbReference>
<dbReference type="SUPFAM" id="SSF75217">
    <property type="entry name" value="alpha/beta knot"/>
    <property type="match status" value="1"/>
</dbReference>
<feature type="chain" id="PRO_1000147071" description="tRNA (guanine-N(1)-)-methyltransferase">
    <location>
        <begin position="1"/>
        <end position="244"/>
    </location>
</feature>
<feature type="binding site" evidence="1">
    <location>
        <position position="113"/>
    </location>
    <ligand>
        <name>S-adenosyl-L-methionine</name>
        <dbReference type="ChEBI" id="CHEBI:59789"/>
    </ligand>
</feature>
<feature type="binding site" evidence="1">
    <location>
        <begin position="133"/>
        <end position="138"/>
    </location>
    <ligand>
        <name>S-adenosyl-L-methionine</name>
        <dbReference type="ChEBI" id="CHEBI:59789"/>
    </ligand>
</feature>